<comment type="function">
    <text evidence="1">Binds the 23S rRNA.</text>
</comment>
<comment type="cofactor">
    <cofactor evidence="1">
        <name>Zn(2+)</name>
        <dbReference type="ChEBI" id="CHEBI:29105"/>
    </cofactor>
    <text evidence="1">Binds 1 zinc ion per subunit.</text>
</comment>
<comment type="subunit">
    <text evidence="1">Part of the 50S ribosomal subunit.</text>
</comment>
<comment type="similarity">
    <text evidence="1">Belongs to the bacterial ribosomal protein bL31 family. Type A subfamily.</text>
</comment>
<gene>
    <name evidence="1" type="primary">rpmE</name>
    <name type="ordered locus">SUN_0220</name>
</gene>
<accession>A6Q6S1</accession>
<evidence type="ECO:0000255" key="1">
    <source>
        <dbReference type="HAMAP-Rule" id="MF_00501"/>
    </source>
</evidence>
<evidence type="ECO:0000305" key="2"/>
<dbReference type="EMBL" id="AP009179">
    <property type="protein sequence ID" value="BAF71180.1"/>
    <property type="molecule type" value="Genomic_DNA"/>
</dbReference>
<dbReference type="RefSeq" id="WP_011979913.1">
    <property type="nucleotide sequence ID" value="NC_009663.1"/>
</dbReference>
<dbReference type="SMR" id="A6Q6S1"/>
<dbReference type="STRING" id="387093.SUN_0220"/>
<dbReference type="KEGG" id="sun:SUN_0220"/>
<dbReference type="eggNOG" id="COG0254">
    <property type="taxonomic scope" value="Bacteria"/>
</dbReference>
<dbReference type="HOGENOM" id="CLU_114306_4_3_7"/>
<dbReference type="OrthoDB" id="9803251at2"/>
<dbReference type="Proteomes" id="UP000006378">
    <property type="component" value="Chromosome"/>
</dbReference>
<dbReference type="GO" id="GO:1990904">
    <property type="term" value="C:ribonucleoprotein complex"/>
    <property type="evidence" value="ECO:0007669"/>
    <property type="project" value="UniProtKB-KW"/>
</dbReference>
<dbReference type="GO" id="GO:0005840">
    <property type="term" value="C:ribosome"/>
    <property type="evidence" value="ECO:0007669"/>
    <property type="project" value="UniProtKB-KW"/>
</dbReference>
<dbReference type="GO" id="GO:0046872">
    <property type="term" value="F:metal ion binding"/>
    <property type="evidence" value="ECO:0007669"/>
    <property type="project" value="UniProtKB-KW"/>
</dbReference>
<dbReference type="GO" id="GO:0019843">
    <property type="term" value="F:rRNA binding"/>
    <property type="evidence" value="ECO:0007669"/>
    <property type="project" value="UniProtKB-KW"/>
</dbReference>
<dbReference type="GO" id="GO:0003735">
    <property type="term" value="F:structural constituent of ribosome"/>
    <property type="evidence" value="ECO:0007669"/>
    <property type="project" value="InterPro"/>
</dbReference>
<dbReference type="GO" id="GO:0006412">
    <property type="term" value="P:translation"/>
    <property type="evidence" value="ECO:0007669"/>
    <property type="project" value="UniProtKB-UniRule"/>
</dbReference>
<dbReference type="Gene3D" id="4.10.830.30">
    <property type="entry name" value="Ribosomal protein L31"/>
    <property type="match status" value="1"/>
</dbReference>
<dbReference type="HAMAP" id="MF_00501">
    <property type="entry name" value="Ribosomal_bL31_1"/>
    <property type="match status" value="1"/>
</dbReference>
<dbReference type="InterPro" id="IPR034704">
    <property type="entry name" value="Ribosomal_bL28/bL31-like_sf"/>
</dbReference>
<dbReference type="InterPro" id="IPR002150">
    <property type="entry name" value="Ribosomal_bL31"/>
</dbReference>
<dbReference type="InterPro" id="IPR027491">
    <property type="entry name" value="Ribosomal_bL31_A"/>
</dbReference>
<dbReference type="InterPro" id="IPR042105">
    <property type="entry name" value="Ribosomal_bL31_sf"/>
</dbReference>
<dbReference type="NCBIfam" id="TIGR00105">
    <property type="entry name" value="L31"/>
    <property type="match status" value="1"/>
</dbReference>
<dbReference type="NCBIfam" id="NF000612">
    <property type="entry name" value="PRK00019.1"/>
    <property type="match status" value="1"/>
</dbReference>
<dbReference type="NCBIfam" id="NF001809">
    <property type="entry name" value="PRK00528.1"/>
    <property type="match status" value="1"/>
</dbReference>
<dbReference type="PANTHER" id="PTHR33280">
    <property type="entry name" value="50S RIBOSOMAL PROTEIN L31, CHLOROPLASTIC"/>
    <property type="match status" value="1"/>
</dbReference>
<dbReference type="PANTHER" id="PTHR33280:SF6">
    <property type="entry name" value="LARGE RIBOSOMAL SUBUNIT PROTEIN BL31A"/>
    <property type="match status" value="1"/>
</dbReference>
<dbReference type="Pfam" id="PF01197">
    <property type="entry name" value="Ribosomal_L31"/>
    <property type="match status" value="1"/>
</dbReference>
<dbReference type="PRINTS" id="PR01249">
    <property type="entry name" value="RIBOSOMALL31"/>
</dbReference>
<dbReference type="SUPFAM" id="SSF143800">
    <property type="entry name" value="L28p-like"/>
    <property type="match status" value="1"/>
</dbReference>
<dbReference type="PROSITE" id="PS01143">
    <property type="entry name" value="RIBOSOMAL_L31"/>
    <property type="match status" value="1"/>
</dbReference>
<reference key="1">
    <citation type="journal article" date="2007" name="Proc. Natl. Acad. Sci. U.S.A.">
        <title>Deep-sea vent epsilon-proteobacterial genomes provide insights into emergence of pathogens.</title>
        <authorList>
            <person name="Nakagawa S."/>
            <person name="Takaki Y."/>
            <person name="Shimamura S."/>
            <person name="Reysenbach A.-L."/>
            <person name="Takai K."/>
            <person name="Horikoshi K."/>
        </authorList>
    </citation>
    <scope>NUCLEOTIDE SEQUENCE [LARGE SCALE GENOMIC DNA]</scope>
    <source>
        <strain>NBC37-1</strain>
    </source>
</reference>
<proteinExistence type="inferred from homology"/>
<name>RL31_SULNB</name>
<feature type="chain" id="PRO_1000126746" description="Large ribosomal subunit protein bL31">
    <location>
        <begin position="1"/>
        <end position="66"/>
    </location>
</feature>
<feature type="binding site" evidence="1">
    <location>
        <position position="16"/>
    </location>
    <ligand>
        <name>Zn(2+)</name>
        <dbReference type="ChEBI" id="CHEBI:29105"/>
    </ligand>
</feature>
<feature type="binding site" evidence="1">
    <location>
        <position position="18"/>
    </location>
    <ligand>
        <name>Zn(2+)</name>
        <dbReference type="ChEBI" id="CHEBI:29105"/>
    </ligand>
</feature>
<feature type="binding site" evidence="1">
    <location>
        <position position="36"/>
    </location>
    <ligand>
        <name>Zn(2+)</name>
        <dbReference type="ChEBI" id="CHEBI:29105"/>
    </ligand>
</feature>
<feature type="binding site" evidence="1">
    <location>
        <position position="39"/>
    </location>
    <ligand>
        <name>Zn(2+)</name>
        <dbReference type="ChEBI" id="CHEBI:29105"/>
    </ligand>
</feature>
<organism>
    <name type="scientific">Sulfurovum sp. (strain NBC37-1)</name>
    <dbReference type="NCBI Taxonomy" id="387093"/>
    <lineage>
        <taxon>Bacteria</taxon>
        <taxon>Pseudomonadati</taxon>
        <taxon>Campylobacterota</taxon>
        <taxon>Epsilonproteobacteria</taxon>
        <taxon>Campylobacterales</taxon>
        <taxon>Sulfurovaceae</taxon>
        <taxon>Sulfurovum</taxon>
    </lineage>
</organism>
<protein>
    <recommendedName>
        <fullName evidence="1">Large ribosomal subunit protein bL31</fullName>
    </recommendedName>
    <alternativeName>
        <fullName evidence="2">50S ribosomal protein L31</fullName>
    </alternativeName>
</protein>
<keyword id="KW-0479">Metal-binding</keyword>
<keyword id="KW-0687">Ribonucleoprotein</keyword>
<keyword id="KW-0689">Ribosomal protein</keyword>
<keyword id="KW-0694">RNA-binding</keyword>
<keyword id="KW-0699">rRNA-binding</keyword>
<keyword id="KW-0862">Zinc</keyword>
<sequence>MRKGIHPEYMECKVTCACGNKFEVRSNKPEMSIDICNECHPFFTGSEKILDAAGRVDKFKKKYNLG</sequence>